<proteinExistence type="inferred from homology"/>
<comment type="function">
    <text evidence="1">Involved in nucleotide metabolism: produces dUMP, the immediate precursor of thymidine nucleotides and decreases the intracellular concentration of dUTP to avoid uracil incorporation into viral DNA.</text>
</comment>
<comment type="catalytic activity">
    <reaction evidence="1">
        <text>dUTP + H2O = dUMP + diphosphate + H(+)</text>
        <dbReference type="Rhea" id="RHEA:10248"/>
        <dbReference type="ChEBI" id="CHEBI:15377"/>
        <dbReference type="ChEBI" id="CHEBI:15378"/>
        <dbReference type="ChEBI" id="CHEBI:33019"/>
        <dbReference type="ChEBI" id="CHEBI:61555"/>
        <dbReference type="ChEBI" id="CHEBI:246422"/>
        <dbReference type="EC" id="3.6.1.23"/>
    </reaction>
</comment>
<comment type="cofactor">
    <cofactor evidence="1">
        <name>Mg(2+)</name>
        <dbReference type="ChEBI" id="CHEBI:18420"/>
    </cofactor>
</comment>
<comment type="similarity">
    <text evidence="1">Belongs to the dUTPase family.</text>
</comment>
<feature type="chain" id="PRO_0000182956" description="Deoxyuridine 5'-triphosphate nucleotidohydrolase">
    <location>
        <begin position="1"/>
        <end position="396"/>
    </location>
</feature>
<feature type="binding site" evidence="1">
    <location>
        <begin position="280"/>
        <end position="282"/>
    </location>
    <ligand>
        <name>substrate</name>
    </ligand>
</feature>
<feature type="binding site" evidence="1">
    <location>
        <begin position="380"/>
        <end position="381"/>
    </location>
    <ligand>
        <name>substrate</name>
    </ligand>
</feature>
<organism>
    <name type="scientific">Varicella-zoster virus (strain Dumas)</name>
    <name type="common">HHV-3</name>
    <name type="synonym">Human herpesvirus 3</name>
    <dbReference type="NCBI Taxonomy" id="10338"/>
    <lineage>
        <taxon>Viruses</taxon>
        <taxon>Duplodnaviria</taxon>
        <taxon>Heunggongvirae</taxon>
        <taxon>Peploviricota</taxon>
        <taxon>Herviviricetes</taxon>
        <taxon>Herpesvirales</taxon>
        <taxon>Orthoherpesviridae</taxon>
        <taxon>Alphaherpesvirinae</taxon>
        <taxon>Varicellovirus</taxon>
        <taxon>Varicellovirus humanalpha3</taxon>
        <taxon>Human herpesvirus 3</taxon>
    </lineage>
</organism>
<evidence type="ECO:0000255" key="1">
    <source>
        <dbReference type="HAMAP-Rule" id="MF_04031"/>
    </source>
</evidence>
<reference key="1">
    <citation type="journal article" date="1986" name="J. Gen. Virol.">
        <title>The complete DNA sequence of varicella-zoster virus.</title>
        <authorList>
            <person name="Davison A.J."/>
            <person name="Scott J.E."/>
        </authorList>
    </citation>
    <scope>NUCLEOTIDE SEQUENCE [LARGE SCALE GENOMIC DNA]</scope>
</reference>
<dbReference type="EC" id="3.6.1.23" evidence="1"/>
<dbReference type="EMBL" id="X04370">
    <property type="protein sequence ID" value="CAA27891.1"/>
    <property type="molecule type" value="Genomic_DNA"/>
</dbReference>
<dbReference type="PIR" id="H27212">
    <property type="entry name" value="WZBE8"/>
</dbReference>
<dbReference type="Proteomes" id="UP000002602">
    <property type="component" value="Genome"/>
</dbReference>
<dbReference type="GO" id="GO:0004170">
    <property type="term" value="F:dUTP diphosphatase activity"/>
    <property type="evidence" value="ECO:0007669"/>
    <property type="project" value="UniProtKB-EC"/>
</dbReference>
<dbReference type="GO" id="GO:0046872">
    <property type="term" value="F:metal ion binding"/>
    <property type="evidence" value="ECO:0007669"/>
    <property type="project" value="UniProtKB-KW"/>
</dbReference>
<dbReference type="GO" id="GO:0046080">
    <property type="term" value="P:dUTP metabolic process"/>
    <property type="evidence" value="ECO:0007669"/>
    <property type="project" value="InterPro"/>
</dbReference>
<dbReference type="Gene3D" id="2.70.40.10">
    <property type="match status" value="1"/>
</dbReference>
<dbReference type="HAMAP" id="MF_04031">
    <property type="entry name" value="HSV_DUT"/>
    <property type="match status" value="1"/>
</dbReference>
<dbReference type="InterPro" id="IPR029054">
    <property type="entry name" value="dUTPase-like"/>
</dbReference>
<dbReference type="InterPro" id="IPR036157">
    <property type="entry name" value="dUTPase-like_sf"/>
</dbReference>
<dbReference type="InterPro" id="IPR034745">
    <property type="entry name" value="HSV_DUT"/>
</dbReference>
<dbReference type="Pfam" id="PF00692">
    <property type="entry name" value="dUTPase"/>
    <property type="match status" value="1"/>
</dbReference>
<dbReference type="SUPFAM" id="SSF51283">
    <property type="entry name" value="dUTPase-like"/>
    <property type="match status" value="2"/>
</dbReference>
<gene>
    <name evidence="1" type="primary">DUT</name>
    <name type="ordered locus">ORF8</name>
</gene>
<sequence length="396" mass="44819">MNEAVIDPILETAVNTGDMFCSQTIPNRCLKDTILIEVQPECADTLQCVLDDKVSRHQPLLLRNHKKLELPSEKSVTRGGFYMQQLELLVKSAPPNEYALLLIQCKDTALADEDNFFVANGVIDAGYRGVISALLYYRPGVTVILPGHLTIYLFPVKLRQSRLLPKNVLKHLDPIFKSIQVQPLSNSPSNYEKPVIPEFADISTVQQGQPLHRDSAEYHIDVPLTYKHIINPKRQEDAGYDICVPYNLYLKRNEFIKIVLPIIRDWDLQHPSINAYIFGRSSKSRSGIIVCPTAWPAGEHCKFYVYNLTGDDIRIKTGDRLAQVLLIDHNTQIHLKHNVLSNIAFPYAIRGKCGIPGVQWYFTKTLDLIATPSERGTRGFGSTDKETNDVDFLLKH</sequence>
<name>DUT_VZVD</name>
<accession>P09254</accession>
<protein>
    <recommendedName>
        <fullName evidence="1">Deoxyuridine 5'-triphosphate nucleotidohydrolase</fullName>
        <shortName evidence="1">dUTPase</shortName>
        <ecNumber evidence="1">3.6.1.23</ecNumber>
    </recommendedName>
    <alternativeName>
        <fullName evidence="1">dUTP pyrophosphatase</fullName>
    </alternativeName>
</protein>
<keyword id="KW-0378">Hydrolase</keyword>
<keyword id="KW-0460">Magnesium</keyword>
<keyword id="KW-0479">Metal-binding</keyword>
<keyword id="KW-0546">Nucleotide metabolism</keyword>
<keyword id="KW-1185">Reference proteome</keyword>
<organismHost>
    <name type="scientific">Homo sapiens</name>
    <name type="common">Human</name>
    <dbReference type="NCBI Taxonomy" id="9606"/>
</organismHost>